<dbReference type="EC" id="3.6.4.-" evidence="1"/>
<dbReference type="EMBL" id="CP000825">
    <property type="protein sequence ID" value="ABV51502.1"/>
    <property type="molecule type" value="Genomic_DNA"/>
</dbReference>
<dbReference type="RefSeq" id="WP_012008498.1">
    <property type="nucleotide sequence ID" value="NC_009840.1"/>
</dbReference>
<dbReference type="SMR" id="A8G7C1"/>
<dbReference type="STRING" id="93060.P9215_18891"/>
<dbReference type="KEGG" id="pmh:P9215_18891"/>
<dbReference type="eggNOG" id="COG2255">
    <property type="taxonomic scope" value="Bacteria"/>
</dbReference>
<dbReference type="HOGENOM" id="CLU_055599_1_0_3"/>
<dbReference type="OrthoDB" id="9804478at2"/>
<dbReference type="Proteomes" id="UP000002014">
    <property type="component" value="Chromosome"/>
</dbReference>
<dbReference type="GO" id="GO:0005737">
    <property type="term" value="C:cytoplasm"/>
    <property type="evidence" value="ECO:0007669"/>
    <property type="project" value="UniProtKB-SubCell"/>
</dbReference>
<dbReference type="GO" id="GO:0048476">
    <property type="term" value="C:Holliday junction resolvase complex"/>
    <property type="evidence" value="ECO:0007669"/>
    <property type="project" value="UniProtKB-UniRule"/>
</dbReference>
<dbReference type="GO" id="GO:0005524">
    <property type="term" value="F:ATP binding"/>
    <property type="evidence" value="ECO:0007669"/>
    <property type="project" value="UniProtKB-UniRule"/>
</dbReference>
<dbReference type="GO" id="GO:0016887">
    <property type="term" value="F:ATP hydrolysis activity"/>
    <property type="evidence" value="ECO:0007669"/>
    <property type="project" value="InterPro"/>
</dbReference>
<dbReference type="GO" id="GO:0000400">
    <property type="term" value="F:four-way junction DNA binding"/>
    <property type="evidence" value="ECO:0007669"/>
    <property type="project" value="UniProtKB-UniRule"/>
</dbReference>
<dbReference type="GO" id="GO:0009378">
    <property type="term" value="F:four-way junction helicase activity"/>
    <property type="evidence" value="ECO:0007669"/>
    <property type="project" value="InterPro"/>
</dbReference>
<dbReference type="GO" id="GO:0006310">
    <property type="term" value="P:DNA recombination"/>
    <property type="evidence" value="ECO:0007669"/>
    <property type="project" value="UniProtKB-UniRule"/>
</dbReference>
<dbReference type="GO" id="GO:0006281">
    <property type="term" value="P:DNA repair"/>
    <property type="evidence" value="ECO:0007669"/>
    <property type="project" value="UniProtKB-UniRule"/>
</dbReference>
<dbReference type="CDD" id="cd00009">
    <property type="entry name" value="AAA"/>
    <property type="match status" value="1"/>
</dbReference>
<dbReference type="Gene3D" id="1.10.8.60">
    <property type="match status" value="1"/>
</dbReference>
<dbReference type="Gene3D" id="3.40.50.300">
    <property type="entry name" value="P-loop containing nucleotide triphosphate hydrolases"/>
    <property type="match status" value="1"/>
</dbReference>
<dbReference type="Gene3D" id="1.10.10.10">
    <property type="entry name" value="Winged helix-like DNA-binding domain superfamily/Winged helix DNA-binding domain"/>
    <property type="match status" value="1"/>
</dbReference>
<dbReference type="HAMAP" id="MF_00016">
    <property type="entry name" value="DNA_HJ_migration_RuvB"/>
    <property type="match status" value="1"/>
</dbReference>
<dbReference type="InterPro" id="IPR003593">
    <property type="entry name" value="AAA+_ATPase"/>
</dbReference>
<dbReference type="InterPro" id="IPR041445">
    <property type="entry name" value="AAA_lid_4"/>
</dbReference>
<dbReference type="InterPro" id="IPR004605">
    <property type="entry name" value="DNA_helicase_Holl-junc_RuvB"/>
</dbReference>
<dbReference type="InterPro" id="IPR027417">
    <property type="entry name" value="P-loop_NTPase"/>
</dbReference>
<dbReference type="InterPro" id="IPR008824">
    <property type="entry name" value="RuvB-like_N"/>
</dbReference>
<dbReference type="InterPro" id="IPR008823">
    <property type="entry name" value="RuvB_C"/>
</dbReference>
<dbReference type="InterPro" id="IPR036388">
    <property type="entry name" value="WH-like_DNA-bd_sf"/>
</dbReference>
<dbReference type="InterPro" id="IPR036390">
    <property type="entry name" value="WH_DNA-bd_sf"/>
</dbReference>
<dbReference type="NCBIfam" id="NF000868">
    <property type="entry name" value="PRK00080.1"/>
    <property type="match status" value="1"/>
</dbReference>
<dbReference type="NCBIfam" id="TIGR00635">
    <property type="entry name" value="ruvB"/>
    <property type="match status" value="1"/>
</dbReference>
<dbReference type="PANTHER" id="PTHR42848">
    <property type="match status" value="1"/>
</dbReference>
<dbReference type="PANTHER" id="PTHR42848:SF1">
    <property type="entry name" value="HOLLIDAY JUNCTION BRANCH MIGRATION COMPLEX SUBUNIT RUVB"/>
    <property type="match status" value="1"/>
</dbReference>
<dbReference type="Pfam" id="PF17864">
    <property type="entry name" value="AAA_lid_4"/>
    <property type="match status" value="1"/>
</dbReference>
<dbReference type="Pfam" id="PF05491">
    <property type="entry name" value="RuvB_C"/>
    <property type="match status" value="1"/>
</dbReference>
<dbReference type="Pfam" id="PF05496">
    <property type="entry name" value="RuvB_N"/>
    <property type="match status" value="1"/>
</dbReference>
<dbReference type="SMART" id="SM00382">
    <property type="entry name" value="AAA"/>
    <property type="match status" value="1"/>
</dbReference>
<dbReference type="SUPFAM" id="SSF52540">
    <property type="entry name" value="P-loop containing nucleoside triphosphate hydrolases"/>
    <property type="match status" value="1"/>
</dbReference>
<dbReference type="SUPFAM" id="SSF46785">
    <property type="entry name" value="Winged helix' DNA-binding domain"/>
    <property type="match status" value="1"/>
</dbReference>
<keyword id="KW-0067">ATP-binding</keyword>
<keyword id="KW-0963">Cytoplasm</keyword>
<keyword id="KW-0227">DNA damage</keyword>
<keyword id="KW-0233">DNA recombination</keyword>
<keyword id="KW-0234">DNA repair</keyword>
<keyword id="KW-0238">DNA-binding</keyword>
<keyword id="KW-0378">Hydrolase</keyword>
<keyword id="KW-0547">Nucleotide-binding</keyword>
<organism>
    <name type="scientific">Prochlorococcus marinus (strain MIT 9215)</name>
    <dbReference type="NCBI Taxonomy" id="93060"/>
    <lineage>
        <taxon>Bacteria</taxon>
        <taxon>Bacillati</taxon>
        <taxon>Cyanobacteriota</taxon>
        <taxon>Cyanophyceae</taxon>
        <taxon>Synechococcales</taxon>
        <taxon>Prochlorococcaceae</taxon>
        <taxon>Prochlorococcus</taxon>
    </lineage>
</organism>
<accession>A8G7C1</accession>
<protein>
    <recommendedName>
        <fullName evidence="1">Holliday junction branch migration complex subunit RuvB</fullName>
        <ecNumber evidence="1">3.6.4.-</ecNumber>
    </recommendedName>
</protein>
<reference key="1">
    <citation type="journal article" date="2007" name="PLoS Genet.">
        <title>Patterns and implications of gene gain and loss in the evolution of Prochlorococcus.</title>
        <authorList>
            <person name="Kettler G.C."/>
            <person name="Martiny A.C."/>
            <person name="Huang K."/>
            <person name="Zucker J."/>
            <person name="Coleman M.L."/>
            <person name="Rodrigue S."/>
            <person name="Chen F."/>
            <person name="Lapidus A."/>
            <person name="Ferriera S."/>
            <person name="Johnson J."/>
            <person name="Steglich C."/>
            <person name="Church G.M."/>
            <person name="Richardson P."/>
            <person name="Chisholm S.W."/>
        </authorList>
    </citation>
    <scope>NUCLEOTIDE SEQUENCE [LARGE SCALE GENOMIC DNA]</scope>
    <source>
        <strain>MIT 9215</strain>
    </source>
</reference>
<feature type="chain" id="PRO_0000322830" description="Holliday junction branch migration complex subunit RuvB">
    <location>
        <begin position="1"/>
        <end position="352"/>
    </location>
</feature>
<feature type="region of interest" description="Large ATPase domain (RuvB-L)" evidence="1">
    <location>
        <begin position="13"/>
        <end position="201"/>
    </location>
</feature>
<feature type="region of interest" description="Small ATPAse domain (RuvB-S)" evidence="1">
    <location>
        <begin position="202"/>
        <end position="273"/>
    </location>
</feature>
<feature type="region of interest" description="Head domain (RuvB-H)" evidence="1">
    <location>
        <begin position="276"/>
        <end position="352"/>
    </location>
</feature>
<feature type="binding site" evidence="1">
    <location>
        <position position="41"/>
    </location>
    <ligand>
        <name>ATP</name>
        <dbReference type="ChEBI" id="CHEBI:30616"/>
    </ligand>
</feature>
<feature type="binding site" evidence="1">
    <location>
        <position position="82"/>
    </location>
    <ligand>
        <name>ATP</name>
        <dbReference type="ChEBI" id="CHEBI:30616"/>
    </ligand>
</feature>
<feature type="binding site" evidence="1">
    <location>
        <position position="85"/>
    </location>
    <ligand>
        <name>ATP</name>
        <dbReference type="ChEBI" id="CHEBI:30616"/>
    </ligand>
</feature>
<feature type="binding site" evidence="1">
    <location>
        <position position="86"/>
    </location>
    <ligand>
        <name>ATP</name>
        <dbReference type="ChEBI" id="CHEBI:30616"/>
    </ligand>
</feature>
<feature type="binding site" evidence="1">
    <location>
        <position position="86"/>
    </location>
    <ligand>
        <name>Mg(2+)</name>
        <dbReference type="ChEBI" id="CHEBI:18420"/>
    </ligand>
</feature>
<feature type="binding site" evidence="1">
    <location>
        <position position="87"/>
    </location>
    <ligand>
        <name>ATP</name>
        <dbReference type="ChEBI" id="CHEBI:30616"/>
    </ligand>
</feature>
<feature type="binding site" evidence="1">
    <location>
        <begin position="148"/>
        <end position="150"/>
    </location>
    <ligand>
        <name>ATP</name>
        <dbReference type="ChEBI" id="CHEBI:30616"/>
    </ligand>
</feature>
<feature type="binding site" evidence="1">
    <location>
        <position position="191"/>
    </location>
    <ligand>
        <name>ATP</name>
        <dbReference type="ChEBI" id="CHEBI:30616"/>
    </ligand>
</feature>
<feature type="binding site" evidence="1">
    <location>
        <position position="201"/>
    </location>
    <ligand>
        <name>ATP</name>
        <dbReference type="ChEBI" id="CHEBI:30616"/>
    </ligand>
</feature>
<feature type="binding site" evidence="1">
    <location>
        <position position="238"/>
    </location>
    <ligand>
        <name>ATP</name>
        <dbReference type="ChEBI" id="CHEBI:30616"/>
    </ligand>
</feature>
<feature type="binding site" evidence="1">
    <location>
        <position position="330"/>
    </location>
    <ligand>
        <name>DNA</name>
        <dbReference type="ChEBI" id="CHEBI:16991"/>
    </ligand>
</feature>
<feature type="binding site" evidence="1">
    <location>
        <position position="335"/>
    </location>
    <ligand>
        <name>DNA</name>
        <dbReference type="ChEBI" id="CHEBI:16991"/>
    </ligand>
</feature>
<gene>
    <name evidence="1" type="primary">ruvB</name>
    <name type="ordered locus">P9215_18891</name>
</gene>
<comment type="function">
    <text evidence="1">The RuvA-RuvB-RuvC complex processes Holliday junction (HJ) DNA during genetic recombination and DNA repair, while the RuvA-RuvB complex plays an important role in the rescue of blocked DNA replication forks via replication fork reversal (RFR). RuvA specifically binds to HJ cruciform DNA, conferring on it an open structure. The RuvB hexamer acts as an ATP-dependent pump, pulling dsDNA into and through the RuvAB complex. RuvB forms 2 homohexamers on either side of HJ DNA bound by 1 or 2 RuvA tetramers; 4 subunits per hexamer contact DNA at a time. Coordinated motions by a converter formed by DNA-disengaged RuvB subunits stimulates ATP hydrolysis and nucleotide exchange. Immobilization of the converter enables RuvB to convert the ATP-contained energy into a lever motion, pulling 2 nucleotides of DNA out of the RuvA tetramer per ATP hydrolyzed, thus driving DNA branch migration. The RuvB motors rotate together with the DNA substrate, which together with the progressing nucleotide cycle form the mechanistic basis for DNA recombination by continuous HJ branch migration. Branch migration allows RuvC to scan DNA until it finds its consensus sequence, where it cleaves and resolves cruciform DNA.</text>
</comment>
<comment type="catalytic activity">
    <reaction evidence="1">
        <text>ATP + H2O = ADP + phosphate + H(+)</text>
        <dbReference type="Rhea" id="RHEA:13065"/>
        <dbReference type="ChEBI" id="CHEBI:15377"/>
        <dbReference type="ChEBI" id="CHEBI:15378"/>
        <dbReference type="ChEBI" id="CHEBI:30616"/>
        <dbReference type="ChEBI" id="CHEBI:43474"/>
        <dbReference type="ChEBI" id="CHEBI:456216"/>
    </reaction>
</comment>
<comment type="subunit">
    <text evidence="1">Homohexamer. Forms an RuvA(8)-RuvB(12)-Holliday junction (HJ) complex. HJ DNA is sandwiched between 2 RuvA tetramers; dsDNA enters through RuvA and exits via RuvB. An RuvB hexamer assembles on each DNA strand where it exits the tetramer. Each RuvB hexamer is contacted by two RuvA subunits (via domain III) on 2 adjacent RuvB subunits; this complex drives branch migration. In the full resolvosome a probable DNA-RuvA(4)-RuvB(12)-RuvC(2) complex forms which resolves the HJ.</text>
</comment>
<comment type="subcellular location">
    <subcellularLocation>
        <location evidence="1">Cytoplasm</location>
    </subcellularLocation>
</comment>
<comment type="domain">
    <text evidence="1">Has 3 domains, the large (RuvB-L) and small ATPase (RuvB-S) domains and the C-terminal head (RuvB-H) domain. The head domain binds DNA, while the ATPase domains jointly bind ATP, ADP or are empty depending on the state of the subunit in the translocation cycle. During a single DNA translocation step the structure of each domain remains the same, but their relative positions change.</text>
</comment>
<comment type="similarity">
    <text evidence="1">Belongs to the RuvB family.</text>
</comment>
<evidence type="ECO:0000255" key="1">
    <source>
        <dbReference type="HAMAP-Rule" id="MF_00016"/>
    </source>
</evidence>
<name>RUVB_PROM2</name>
<proteinExistence type="inferred from homology"/>
<sequence>MAIISSNIDDNDFSLRKKELRLVDSKVIPEEKKNNNLNLARPLNFKEFIGQEQLKSSLRIAIDASIFRKEPLEHTLLYGQPGLGKTTLAFLIAHELKTKCRIATAPAIERPRDIVGLLLGLKEGEVLFIDEIHRLNRLTEELLYSAMEDFRLDLTMGANRGARCRTINLPRFTLIGATTKLASISAPLRDRFGISQKIEFYTYDELKQIIVNFSRLINLNLDDEASYDLAKISRGTPRIALRLLRRVRDYAQVVMKTNNISVNLIKKALNSYQIDEKGLDSLDRNYLFFLNQNKNIPIGLDSIAAGLGDDSSMLEFVVEPYLIKIGFLTRTPRGRLLTALGKKYIDSKNENF</sequence>